<comment type="function">
    <text evidence="1">Catalyzes the removal of a penultimate prolyl residue from the N-termini of peptides.</text>
</comment>
<comment type="catalytic activity">
    <reaction>
        <text>Release of any N-terminal amino acid, including proline, that is linked to proline, even from a dipeptide or tripeptide.</text>
        <dbReference type="EC" id="3.4.11.9"/>
    </reaction>
</comment>
<comment type="cofactor">
    <cofactor evidence="1">
        <name>Mn(2+)</name>
        <dbReference type="ChEBI" id="CHEBI:29035"/>
    </cofactor>
    <text evidence="1">Binds 2 manganese ions per subunit.</text>
</comment>
<comment type="similarity">
    <text evidence="2">Belongs to the peptidase M24B family.</text>
</comment>
<dbReference type="EC" id="3.4.11.9"/>
<dbReference type="EMBL" id="DS995702">
    <property type="protein sequence ID" value="EEQ28899.1"/>
    <property type="molecule type" value="Genomic_DNA"/>
</dbReference>
<dbReference type="RefSeq" id="XP_002848784.1">
    <property type="nucleotide sequence ID" value="XM_002848738.1"/>
</dbReference>
<dbReference type="SMR" id="C5FHR9"/>
<dbReference type="STRING" id="554155.C5FHR9"/>
<dbReference type="GeneID" id="9227763"/>
<dbReference type="VEuPathDB" id="FungiDB:MCYG_01718"/>
<dbReference type="eggNOG" id="KOG2413">
    <property type="taxonomic scope" value="Eukaryota"/>
</dbReference>
<dbReference type="HOGENOM" id="CLU_011781_2_2_1"/>
<dbReference type="OMA" id="EPGMILS"/>
<dbReference type="OrthoDB" id="9995434at2759"/>
<dbReference type="Proteomes" id="UP000002035">
    <property type="component" value="Unassembled WGS sequence"/>
</dbReference>
<dbReference type="GO" id="GO:0005737">
    <property type="term" value="C:cytoplasm"/>
    <property type="evidence" value="ECO:0007669"/>
    <property type="project" value="UniProtKB-ARBA"/>
</dbReference>
<dbReference type="GO" id="GO:0046872">
    <property type="term" value="F:metal ion binding"/>
    <property type="evidence" value="ECO:0007669"/>
    <property type="project" value="UniProtKB-KW"/>
</dbReference>
<dbReference type="GO" id="GO:0070006">
    <property type="term" value="F:metalloaminopeptidase activity"/>
    <property type="evidence" value="ECO:0007669"/>
    <property type="project" value="InterPro"/>
</dbReference>
<dbReference type="GO" id="GO:0006508">
    <property type="term" value="P:proteolysis"/>
    <property type="evidence" value="ECO:0007669"/>
    <property type="project" value="UniProtKB-KW"/>
</dbReference>
<dbReference type="CDD" id="cd01085">
    <property type="entry name" value="APP"/>
    <property type="match status" value="1"/>
</dbReference>
<dbReference type="FunFam" id="3.90.230.10:FF:000007">
    <property type="entry name" value="Xaa-Pro aminopeptidase P"/>
    <property type="match status" value="1"/>
</dbReference>
<dbReference type="FunFam" id="3.40.350.10:FF:000003">
    <property type="entry name" value="Xaa-pro aminopeptidase P"/>
    <property type="match status" value="1"/>
</dbReference>
<dbReference type="Gene3D" id="3.90.230.10">
    <property type="entry name" value="Creatinase/methionine aminopeptidase superfamily"/>
    <property type="match status" value="1"/>
</dbReference>
<dbReference type="Gene3D" id="3.40.350.10">
    <property type="entry name" value="Creatinase/prolidase N-terminal domain"/>
    <property type="match status" value="3"/>
</dbReference>
<dbReference type="InterPro" id="IPR029149">
    <property type="entry name" value="Creatin/AminoP/Spt16_N"/>
</dbReference>
<dbReference type="InterPro" id="IPR036005">
    <property type="entry name" value="Creatinase/aminopeptidase-like"/>
</dbReference>
<dbReference type="InterPro" id="IPR000587">
    <property type="entry name" value="Creatinase_N"/>
</dbReference>
<dbReference type="InterPro" id="IPR000994">
    <property type="entry name" value="Pept_M24"/>
</dbReference>
<dbReference type="InterPro" id="IPR033740">
    <property type="entry name" value="Pept_M24B"/>
</dbReference>
<dbReference type="InterPro" id="IPR032416">
    <property type="entry name" value="Peptidase_M24_C"/>
</dbReference>
<dbReference type="InterPro" id="IPR001131">
    <property type="entry name" value="Peptidase_M24B_aminopep-P_CS"/>
</dbReference>
<dbReference type="InterPro" id="IPR050422">
    <property type="entry name" value="X-Pro_aminopeptidase_P"/>
</dbReference>
<dbReference type="PANTHER" id="PTHR43763">
    <property type="entry name" value="XAA-PRO AMINOPEPTIDASE 1"/>
    <property type="match status" value="1"/>
</dbReference>
<dbReference type="PANTHER" id="PTHR43763:SF6">
    <property type="entry name" value="XAA-PRO AMINOPEPTIDASE 1"/>
    <property type="match status" value="1"/>
</dbReference>
<dbReference type="Pfam" id="PF01321">
    <property type="entry name" value="Creatinase_N"/>
    <property type="match status" value="1"/>
</dbReference>
<dbReference type="Pfam" id="PF16189">
    <property type="entry name" value="Creatinase_N_2"/>
    <property type="match status" value="1"/>
</dbReference>
<dbReference type="Pfam" id="PF00557">
    <property type="entry name" value="Peptidase_M24"/>
    <property type="match status" value="1"/>
</dbReference>
<dbReference type="Pfam" id="PF16188">
    <property type="entry name" value="Peptidase_M24_C"/>
    <property type="match status" value="1"/>
</dbReference>
<dbReference type="SUPFAM" id="SSF55920">
    <property type="entry name" value="Creatinase/aminopeptidase"/>
    <property type="match status" value="1"/>
</dbReference>
<dbReference type="SUPFAM" id="SSF53092">
    <property type="entry name" value="Creatinase/prolidase N-terminal domain"/>
    <property type="match status" value="1"/>
</dbReference>
<dbReference type="PROSITE" id="PS00491">
    <property type="entry name" value="PROLINE_PEPTIDASE"/>
    <property type="match status" value="1"/>
</dbReference>
<feature type="chain" id="PRO_0000411777" description="Probable Xaa-Pro aminopeptidase P">
    <location>
        <begin position="1"/>
        <end position="624"/>
    </location>
</feature>
<feature type="binding site" evidence="1">
    <location>
        <position position="421"/>
    </location>
    <ligand>
        <name>Mn(2+)</name>
        <dbReference type="ChEBI" id="CHEBI:29035"/>
        <label>2</label>
    </ligand>
</feature>
<feature type="binding site" evidence="1">
    <location>
        <position position="432"/>
    </location>
    <ligand>
        <name>Mn(2+)</name>
        <dbReference type="ChEBI" id="CHEBI:29035"/>
        <label>1</label>
    </ligand>
</feature>
<feature type="binding site" evidence="1">
    <location>
        <position position="432"/>
    </location>
    <ligand>
        <name>Mn(2+)</name>
        <dbReference type="ChEBI" id="CHEBI:29035"/>
        <label>2</label>
    </ligand>
</feature>
<feature type="binding site" evidence="1">
    <location>
        <position position="530"/>
    </location>
    <ligand>
        <name>Mn(2+)</name>
        <dbReference type="ChEBI" id="CHEBI:29035"/>
        <label>1</label>
    </ligand>
</feature>
<feature type="binding site" evidence="1">
    <location>
        <position position="544"/>
    </location>
    <ligand>
        <name>Mn(2+)</name>
        <dbReference type="ChEBI" id="CHEBI:29035"/>
        <label>1</label>
    </ligand>
</feature>
<feature type="binding site" evidence="1">
    <location>
        <position position="544"/>
    </location>
    <ligand>
        <name>Mn(2+)</name>
        <dbReference type="ChEBI" id="CHEBI:29035"/>
        <label>2</label>
    </ligand>
</feature>
<name>AMPP1_ARTOC</name>
<accession>C5FHR9</accession>
<organism>
    <name type="scientific">Arthroderma otae (strain ATCC MYA-4605 / CBS 113480)</name>
    <name type="common">Microsporum canis</name>
    <dbReference type="NCBI Taxonomy" id="554155"/>
    <lineage>
        <taxon>Eukaryota</taxon>
        <taxon>Fungi</taxon>
        <taxon>Dikarya</taxon>
        <taxon>Ascomycota</taxon>
        <taxon>Pezizomycotina</taxon>
        <taxon>Eurotiomycetes</taxon>
        <taxon>Eurotiomycetidae</taxon>
        <taxon>Onygenales</taxon>
        <taxon>Arthrodermataceae</taxon>
        <taxon>Microsporum</taxon>
    </lineage>
</organism>
<proteinExistence type="inferred from homology"/>
<sequence>MTLFRSHLRFLFKPRFLYFQSPTGQSSRPFSTSQILRTALDMPPPPVDTTQRLAKLRELMKQNKVDVYIVPSEDSHQSEYIAPCDGRRAFISGFTGSAGCAIVSMSKAALSTDGRYFSQAAKQLDANWKLLKRGVEGVPTWEEWTAEQAENGKVVGVDPSLITAADARKLSQTLKATGGSLVGIDQNLIDIVWGDERPARPVTTITVQPVELAGKPFEEKVEALRKELATKKRSAMVISAEIYVDDSRLSPEARKQLEGKVVLKPYDAIFQASKVLAESKASASDGAASGKFLLSNKASWSLSLALGGEQNVDEVRSPITDAKAIKNDVELEGFRKCHIRDGAALIEYFAWLENALIKEGAKLDEVDGADKLYEIRKKYDLFVGNSFDTISSTGANGAIIHYKPEKSTCSVIDPKAMYLCDSGGQYKDGTTDTTRTLHFGEPTEFQKKAYALVLKGHISIDNAIFPKGTTGYAIDSFARQHLWREGLDYLHGTGHGVGSFLNVHEGPMGIGSRAQYAEVPLSAKNVLSNEPGYYEDGNFGIRLENLVICKEVETTHKFGDKPFLGFEYITMVPFCQKLLDASLLTEAERKWVNDYHAKVWEKTSPFFEKDELTLNWLKRETQPI</sequence>
<keyword id="KW-0031">Aminopeptidase</keyword>
<keyword id="KW-0378">Hydrolase</keyword>
<keyword id="KW-0464">Manganese</keyword>
<keyword id="KW-0479">Metal-binding</keyword>
<keyword id="KW-0482">Metalloprotease</keyword>
<keyword id="KW-0645">Protease</keyword>
<keyword id="KW-1185">Reference proteome</keyword>
<gene>
    <name type="primary">AMPP</name>
    <name type="ORF">MCYG_01718</name>
</gene>
<evidence type="ECO:0000250" key="1"/>
<evidence type="ECO:0000305" key="2"/>
<reference key="1">
    <citation type="journal article" date="2012" name="MBio">
        <title>Comparative genome analysis of Trichophyton rubrum and related dermatophytes reveals candidate genes involved in infection.</title>
        <authorList>
            <person name="Martinez D.A."/>
            <person name="Oliver B.G."/>
            <person name="Graeser Y."/>
            <person name="Goldberg J.M."/>
            <person name="Li W."/>
            <person name="Martinez-Rossi N.M."/>
            <person name="Monod M."/>
            <person name="Shelest E."/>
            <person name="Barton R.C."/>
            <person name="Birch E."/>
            <person name="Brakhage A.A."/>
            <person name="Chen Z."/>
            <person name="Gurr S.J."/>
            <person name="Heiman D."/>
            <person name="Heitman J."/>
            <person name="Kosti I."/>
            <person name="Rossi A."/>
            <person name="Saif S."/>
            <person name="Samalova M."/>
            <person name="Saunders C.W."/>
            <person name="Shea T."/>
            <person name="Summerbell R.C."/>
            <person name="Xu J."/>
            <person name="Young S."/>
            <person name="Zeng Q."/>
            <person name="Birren B.W."/>
            <person name="Cuomo C.A."/>
            <person name="White T.C."/>
        </authorList>
    </citation>
    <scope>NUCLEOTIDE SEQUENCE [LARGE SCALE GENOMIC DNA]</scope>
    <source>
        <strain>ATCC MYA-4605 / CBS 113480</strain>
    </source>
</reference>
<protein>
    <recommendedName>
        <fullName>Probable Xaa-Pro aminopeptidase P</fullName>
        <shortName>AMPP</shortName>
        <shortName>Aminopeptidase P</shortName>
        <ecNumber>3.4.11.9</ecNumber>
    </recommendedName>
    <alternativeName>
        <fullName>Aminoacylproline aminopeptidase</fullName>
    </alternativeName>
    <alternativeName>
        <fullName>Prolidase</fullName>
    </alternativeName>
</protein>